<sequence length="569" mass="59128">MNWQGWAEIALTLGLAVAIGWPLGVYMSRVWNGERTWLDPVLRPVEAVFYKAGGIDAQKSQSWWGYAGALLAFNFVGFLLVYAVLRLQGVLPMNPQGFSGLSGHLSFNTAISFVTNTNWQSYAGETTMSTLSQMLVLTVQNFLSAATGATVAAALARAFVANRGEGVGNFWADLVRTTLYVLLPLSFVVAIVLVALGLPQTLAAGVTAHTLEGADQKISLYAVASQEAIKMLGINGGGVFNANSAHPFENPTPLTNLITAVSINVLGWAAFFAFGRSVLAKKDIRALVIAASILLSAGAATVYWTETQVAPAQVAAQVDTSVNMEGKETRFGAPATAAWVAMTTGASNGSVNGMHSSLMPLGGGMAMFLMHLGEILPGGIGSGIAVMIVMAVLAVFVAGLMVGRTPEYLGKKIEAREVQLALLTVLAIPVATLGFSAIAAVLPEALKGLMHSGPHGMSEILYAYTSATANNGSAFAGLTANAPWWDTTMGVAMAMGRFMPIVAVLAMAGSLVGKPKLAPSAGTLPTHGGLFVGLLIGVILILGGLQFFPALALGPIVEHFQVLAAVAGH</sequence>
<protein>
    <recommendedName>
        <fullName evidence="1">Potassium-transporting ATPase potassium-binding subunit</fullName>
    </recommendedName>
    <alternativeName>
        <fullName evidence="1">ATP phosphohydrolase [potassium-transporting] A chain</fullName>
    </alternativeName>
    <alternativeName>
        <fullName evidence="1">Potassium-binding and translocating subunit A</fullName>
    </alternativeName>
    <alternativeName>
        <fullName evidence="1">Potassium-translocating ATPase A chain</fullName>
    </alternativeName>
</protein>
<accession>B0SYJ7</accession>
<keyword id="KW-0997">Cell inner membrane</keyword>
<keyword id="KW-1003">Cell membrane</keyword>
<keyword id="KW-0406">Ion transport</keyword>
<keyword id="KW-0472">Membrane</keyword>
<keyword id="KW-0630">Potassium</keyword>
<keyword id="KW-0633">Potassium transport</keyword>
<keyword id="KW-0812">Transmembrane</keyword>
<keyword id="KW-1133">Transmembrane helix</keyword>
<keyword id="KW-0813">Transport</keyword>
<comment type="function">
    <text evidence="1">Part of the high-affinity ATP-driven potassium transport (or Kdp) system, which catalyzes the hydrolysis of ATP coupled with the electrogenic transport of potassium into the cytoplasm. This subunit binds the periplasmic potassium ions and delivers the ions to the membrane domain of KdpB through an intramembrane tunnel.</text>
</comment>
<comment type="subunit">
    <text evidence="1">The system is composed of three essential subunits: KdpA, KdpB and KdpC.</text>
</comment>
<comment type="subcellular location">
    <subcellularLocation>
        <location evidence="1">Cell inner membrane</location>
        <topology evidence="1">Multi-pass membrane protein</topology>
    </subcellularLocation>
</comment>
<comment type="similarity">
    <text evidence="1">Belongs to the KdpA family.</text>
</comment>
<evidence type="ECO:0000255" key="1">
    <source>
        <dbReference type="HAMAP-Rule" id="MF_00275"/>
    </source>
</evidence>
<feature type="chain" id="PRO_1000078779" description="Potassium-transporting ATPase potassium-binding subunit">
    <location>
        <begin position="1"/>
        <end position="569"/>
    </location>
</feature>
<feature type="transmembrane region" description="Helical" evidence="1">
    <location>
        <begin position="5"/>
        <end position="25"/>
    </location>
</feature>
<feature type="transmembrane region" description="Helical" evidence="1">
    <location>
        <begin position="65"/>
        <end position="85"/>
    </location>
</feature>
<feature type="transmembrane region" description="Helical" evidence="1">
    <location>
        <begin position="135"/>
        <end position="155"/>
    </location>
</feature>
<feature type="transmembrane region" description="Helical" evidence="1">
    <location>
        <begin position="179"/>
        <end position="199"/>
    </location>
</feature>
<feature type="transmembrane region" description="Helical" evidence="1">
    <location>
        <begin position="254"/>
        <end position="274"/>
    </location>
</feature>
<feature type="transmembrane region" description="Helical" evidence="1">
    <location>
        <begin position="286"/>
        <end position="306"/>
    </location>
</feature>
<feature type="transmembrane region" description="Helical" evidence="1">
    <location>
        <begin position="383"/>
        <end position="403"/>
    </location>
</feature>
<feature type="transmembrane region" description="Helical" evidence="1">
    <location>
        <begin position="422"/>
        <end position="442"/>
    </location>
</feature>
<feature type="transmembrane region" description="Helical" evidence="1">
    <location>
        <begin position="489"/>
        <end position="509"/>
    </location>
</feature>
<feature type="transmembrane region" description="Helical" evidence="1">
    <location>
        <begin position="528"/>
        <end position="548"/>
    </location>
</feature>
<proteinExistence type="inferred from homology"/>
<gene>
    <name evidence="1" type="primary">kdpA</name>
    <name type="ordered locus">Caul_4242</name>
</gene>
<name>KDPA_CAUSK</name>
<reference key="1">
    <citation type="submission" date="2008-01" db="EMBL/GenBank/DDBJ databases">
        <title>Complete sequence of chromosome of Caulobacter sp. K31.</title>
        <authorList>
            <consortium name="US DOE Joint Genome Institute"/>
            <person name="Copeland A."/>
            <person name="Lucas S."/>
            <person name="Lapidus A."/>
            <person name="Barry K."/>
            <person name="Glavina del Rio T."/>
            <person name="Dalin E."/>
            <person name="Tice H."/>
            <person name="Pitluck S."/>
            <person name="Bruce D."/>
            <person name="Goodwin L."/>
            <person name="Thompson L.S."/>
            <person name="Brettin T."/>
            <person name="Detter J.C."/>
            <person name="Han C."/>
            <person name="Schmutz J."/>
            <person name="Larimer F."/>
            <person name="Land M."/>
            <person name="Hauser L."/>
            <person name="Kyrpides N."/>
            <person name="Kim E."/>
            <person name="Stephens C."/>
            <person name="Richardson P."/>
        </authorList>
    </citation>
    <scope>NUCLEOTIDE SEQUENCE [LARGE SCALE GENOMIC DNA]</scope>
    <source>
        <strain>K31</strain>
    </source>
</reference>
<dbReference type="EMBL" id="CP000927">
    <property type="protein sequence ID" value="ABZ73364.1"/>
    <property type="molecule type" value="Genomic_DNA"/>
</dbReference>
<dbReference type="SMR" id="B0SYJ7"/>
<dbReference type="STRING" id="366602.Caul_4242"/>
<dbReference type="KEGG" id="cak:Caul_4242"/>
<dbReference type="eggNOG" id="COG2060">
    <property type="taxonomic scope" value="Bacteria"/>
</dbReference>
<dbReference type="HOGENOM" id="CLU_018614_3_0_5"/>
<dbReference type="OrthoDB" id="9763796at2"/>
<dbReference type="GO" id="GO:0005886">
    <property type="term" value="C:plasma membrane"/>
    <property type="evidence" value="ECO:0007669"/>
    <property type="project" value="UniProtKB-SubCell"/>
</dbReference>
<dbReference type="GO" id="GO:0008556">
    <property type="term" value="F:P-type potassium transmembrane transporter activity"/>
    <property type="evidence" value="ECO:0007669"/>
    <property type="project" value="InterPro"/>
</dbReference>
<dbReference type="GO" id="GO:0030955">
    <property type="term" value="F:potassium ion binding"/>
    <property type="evidence" value="ECO:0007669"/>
    <property type="project" value="UniProtKB-UniRule"/>
</dbReference>
<dbReference type="HAMAP" id="MF_00275">
    <property type="entry name" value="KdpA"/>
    <property type="match status" value="1"/>
</dbReference>
<dbReference type="InterPro" id="IPR004623">
    <property type="entry name" value="KdpA"/>
</dbReference>
<dbReference type="NCBIfam" id="TIGR00680">
    <property type="entry name" value="kdpA"/>
    <property type="match status" value="1"/>
</dbReference>
<dbReference type="PANTHER" id="PTHR30607">
    <property type="entry name" value="POTASSIUM-TRANSPORTING ATPASE A CHAIN"/>
    <property type="match status" value="1"/>
</dbReference>
<dbReference type="PANTHER" id="PTHR30607:SF2">
    <property type="entry name" value="POTASSIUM-TRANSPORTING ATPASE POTASSIUM-BINDING SUBUNIT"/>
    <property type="match status" value="1"/>
</dbReference>
<dbReference type="Pfam" id="PF03814">
    <property type="entry name" value="KdpA"/>
    <property type="match status" value="1"/>
</dbReference>
<dbReference type="PIRSF" id="PIRSF001294">
    <property type="entry name" value="K_ATPaseA"/>
    <property type="match status" value="1"/>
</dbReference>
<organism>
    <name type="scientific">Caulobacter sp. (strain K31)</name>
    <dbReference type="NCBI Taxonomy" id="366602"/>
    <lineage>
        <taxon>Bacteria</taxon>
        <taxon>Pseudomonadati</taxon>
        <taxon>Pseudomonadota</taxon>
        <taxon>Alphaproteobacteria</taxon>
        <taxon>Caulobacterales</taxon>
        <taxon>Caulobacteraceae</taxon>
        <taxon>Caulobacter</taxon>
    </lineage>
</organism>